<keyword id="KW-0012">Acyltransferase</keyword>
<keyword id="KW-0963">Cytoplasm</keyword>
<keyword id="KW-0408">Iron</keyword>
<keyword id="KW-0479">Metal-binding</keyword>
<keyword id="KW-0808">Transferase</keyword>
<keyword id="KW-0819">tRNA processing</keyword>
<proteinExistence type="inferred from homology"/>
<sequence>MKVLGLETSCDETGLAIFDSELLAEGKNGLLGQVLYSQIELHATYGGVVPELASRDHIRKLVPLLDELLAQCDISKDEIDAIAYTKGPGLIGALMTGALFGRSLAYGLDVPAIGIHHMEGHLLSPLLGPNPPKFPFVSLLVSGGHTLLVAAHGIGEYEILGESIDDAAGECFDKAAKMLGLPYPGGPNVARLAEQGDPLKYELPRPMLHRGLDFSFSGMKTAVHNLIKDTPGSDNDEQVRADIAASFQHAVVDTLVKKCVKALKQTGMKQLVIAGGVSANLHLRQTLEQQLAKIGATVHYAPLELCTDNGAMIAYAGYQRLQAGQQDALSVSCVPRWNISDLPALAQ</sequence>
<accession>A5WCC7</accession>
<feature type="chain" id="PRO_1000073524" description="tRNA N6-adenosine threonylcarbamoyltransferase">
    <location>
        <begin position="1"/>
        <end position="347"/>
    </location>
</feature>
<feature type="binding site" evidence="1">
    <location>
        <position position="117"/>
    </location>
    <ligand>
        <name>Fe cation</name>
        <dbReference type="ChEBI" id="CHEBI:24875"/>
    </ligand>
</feature>
<feature type="binding site" evidence="1">
    <location>
        <position position="121"/>
    </location>
    <ligand>
        <name>Fe cation</name>
        <dbReference type="ChEBI" id="CHEBI:24875"/>
    </ligand>
</feature>
<feature type="binding site" evidence="1">
    <location>
        <begin position="140"/>
        <end position="144"/>
    </location>
    <ligand>
        <name>substrate</name>
    </ligand>
</feature>
<feature type="binding site" evidence="1">
    <location>
        <position position="173"/>
    </location>
    <ligand>
        <name>substrate</name>
    </ligand>
</feature>
<feature type="binding site" evidence="1">
    <location>
        <position position="186"/>
    </location>
    <ligand>
        <name>substrate</name>
    </ligand>
</feature>
<feature type="binding site" evidence="1">
    <location>
        <position position="280"/>
    </location>
    <ligand>
        <name>substrate</name>
    </ligand>
</feature>
<feature type="binding site" evidence="1">
    <location>
        <position position="308"/>
    </location>
    <ligand>
        <name>Fe cation</name>
        <dbReference type="ChEBI" id="CHEBI:24875"/>
    </ligand>
</feature>
<gene>
    <name evidence="1" type="primary">tsaD</name>
    <name type="synonym">gcp</name>
    <name type="ordered locus">PsycPRwf_0363</name>
</gene>
<name>TSAD_PSYWF</name>
<reference key="1">
    <citation type="submission" date="2007-05" db="EMBL/GenBank/DDBJ databases">
        <title>Complete sequence of chromosome of Psychrobacter sp. PRwf-1.</title>
        <authorList>
            <consortium name="US DOE Joint Genome Institute"/>
            <person name="Copeland A."/>
            <person name="Lucas S."/>
            <person name="Lapidus A."/>
            <person name="Barry K."/>
            <person name="Detter J.C."/>
            <person name="Glavina del Rio T."/>
            <person name="Hammon N."/>
            <person name="Israni S."/>
            <person name="Dalin E."/>
            <person name="Tice H."/>
            <person name="Pitluck S."/>
            <person name="Chain P."/>
            <person name="Malfatti S."/>
            <person name="Shin M."/>
            <person name="Vergez L."/>
            <person name="Schmutz J."/>
            <person name="Larimer F."/>
            <person name="Land M."/>
            <person name="Hauser L."/>
            <person name="Kyrpides N."/>
            <person name="Kim E."/>
            <person name="Tiedje J."/>
            <person name="Richardson P."/>
        </authorList>
    </citation>
    <scope>NUCLEOTIDE SEQUENCE [LARGE SCALE GENOMIC DNA]</scope>
    <source>
        <strain>PRwf-1</strain>
    </source>
</reference>
<organism>
    <name type="scientific">Psychrobacter sp. (strain PRwf-1)</name>
    <dbReference type="NCBI Taxonomy" id="349106"/>
    <lineage>
        <taxon>Bacteria</taxon>
        <taxon>Pseudomonadati</taxon>
        <taxon>Pseudomonadota</taxon>
        <taxon>Gammaproteobacteria</taxon>
        <taxon>Moraxellales</taxon>
        <taxon>Moraxellaceae</taxon>
        <taxon>Psychrobacter</taxon>
    </lineage>
</organism>
<comment type="function">
    <text evidence="1">Required for the formation of a threonylcarbamoyl group on adenosine at position 37 (t(6)A37) in tRNAs that read codons beginning with adenine. Is involved in the transfer of the threonylcarbamoyl moiety of threonylcarbamoyl-AMP (TC-AMP) to the N6 group of A37, together with TsaE and TsaB. TsaD likely plays a direct catalytic role in this reaction.</text>
</comment>
<comment type="catalytic activity">
    <reaction evidence="1">
        <text>L-threonylcarbamoyladenylate + adenosine(37) in tRNA = N(6)-L-threonylcarbamoyladenosine(37) in tRNA + AMP + H(+)</text>
        <dbReference type="Rhea" id="RHEA:37059"/>
        <dbReference type="Rhea" id="RHEA-COMP:10162"/>
        <dbReference type="Rhea" id="RHEA-COMP:10163"/>
        <dbReference type="ChEBI" id="CHEBI:15378"/>
        <dbReference type="ChEBI" id="CHEBI:73682"/>
        <dbReference type="ChEBI" id="CHEBI:74411"/>
        <dbReference type="ChEBI" id="CHEBI:74418"/>
        <dbReference type="ChEBI" id="CHEBI:456215"/>
        <dbReference type="EC" id="2.3.1.234"/>
    </reaction>
</comment>
<comment type="cofactor">
    <cofactor evidence="1">
        <name>Fe(2+)</name>
        <dbReference type="ChEBI" id="CHEBI:29033"/>
    </cofactor>
    <text evidence="1">Binds 1 Fe(2+) ion per subunit.</text>
</comment>
<comment type="subcellular location">
    <subcellularLocation>
        <location evidence="1">Cytoplasm</location>
    </subcellularLocation>
</comment>
<comment type="similarity">
    <text evidence="1">Belongs to the KAE1 / TsaD family.</text>
</comment>
<protein>
    <recommendedName>
        <fullName evidence="1">tRNA N6-adenosine threonylcarbamoyltransferase</fullName>
        <ecNumber evidence="1">2.3.1.234</ecNumber>
    </recommendedName>
    <alternativeName>
        <fullName evidence="1">N6-L-threonylcarbamoyladenine synthase</fullName>
        <shortName evidence="1">t(6)A synthase</shortName>
    </alternativeName>
    <alternativeName>
        <fullName evidence="1">t(6)A37 threonylcarbamoyladenosine biosynthesis protein TsaD</fullName>
    </alternativeName>
    <alternativeName>
        <fullName evidence="1">tRNA threonylcarbamoyladenosine biosynthesis protein TsaD</fullName>
    </alternativeName>
</protein>
<dbReference type="EC" id="2.3.1.234" evidence="1"/>
<dbReference type="EMBL" id="CP000713">
    <property type="protein sequence ID" value="ABQ93318.1"/>
    <property type="molecule type" value="Genomic_DNA"/>
</dbReference>
<dbReference type="SMR" id="A5WCC7"/>
<dbReference type="STRING" id="349106.PsycPRwf_0363"/>
<dbReference type="KEGG" id="prw:PsycPRwf_0363"/>
<dbReference type="eggNOG" id="COG0533">
    <property type="taxonomic scope" value="Bacteria"/>
</dbReference>
<dbReference type="HOGENOM" id="CLU_023208_0_2_6"/>
<dbReference type="GO" id="GO:0005737">
    <property type="term" value="C:cytoplasm"/>
    <property type="evidence" value="ECO:0007669"/>
    <property type="project" value="UniProtKB-SubCell"/>
</dbReference>
<dbReference type="GO" id="GO:0005506">
    <property type="term" value="F:iron ion binding"/>
    <property type="evidence" value="ECO:0007669"/>
    <property type="project" value="UniProtKB-UniRule"/>
</dbReference>
<dbReference type="GO" id="GO:0061711">
    <property type="term" value="F:N(6)-L-threonylcarbamoyladenine synthase activity"/>
    <property type="evidence" value="ECO:0007669"/>
    <property type="project" value="UniProtKB-EC"/>
</dbReference>
<dbReference type="GO" id="GO:0002949">
    <property type="term" value="P:tRNA threonylcarbamoyladenosine modification"/>
    <property type="evidence" value="ECO:0007669"/>
    <property type="project" value="UniProtKB-UniRule"/>
</dbReference>
<dbReference type="CDD" id="cd24133">
    <property type="entry name" value="ASKHA_NBD_TsaD_bac"/>
    <property type="match status" value="1"/>
</dbReference>
<dbReference type="FunFam" id="3.30.420.40:FF:000040">
    <property type="entry name" value="tRNA N6-adenosine threonylcarbamoyltransferase"/>
    <property type="match status" value="1"/>
</dbReference>
<dbReference type="Gene3D" id="3.30.420.40">
    <property type="match status" value="2"/>
</dbReference>
<dbReference type="HAMAP" id="MF_01445">
    <property type="entry name" value="TsaD"/>
    <property type="match status" value="1"/>
</dbReference>
<dbReference type="InterPro" id="IPR043129">
    <property type="entry name" value="ATPase_NBD"/>
</dbReference>
<dbReference type="InterPro" id="IPR000905">
    <property type="entry name" value="Gcp-like_dom"/>
</dbReference>
<dbReference type="InterPro" id="IPR017861">
    <property type="entry name" value="KAE1/TsaD"/>
</dbReference>
<dbReference type="InterPro" id="IPR017860">
    <property type="entry name" value="Peptidase_M22_CS"/>
</dbReference>
<dbReference type="InterPro" id="IPR022450">
    <property type="entry name" value="TsaD"/>
</dbReference>
<dbReference type="NCBIfam" id="TIGR00329">
    <property type="entry name" value="gcp_kae1"/>
    <property type="match status" value="1"/>
</dbReference>
<dbReference type="NCBIfam" id="TIGR03723">
    <property type="entry name" value="T6A_TsaD_YgjD"/>
    <property type="match status" value="1"/>
</dbReference>
<dbReference type="PANTHER" id="PTHR11735">
    <property type="entry name" value="TRNA N6-ADENOSINE THREONYLCARBAMOYLTRANSFERASE"/>
    <property type="match status" value="1"/>
</dbReference>
<dbReference type="PANTHER" id="PTHR11735:SF6">
    <property type="entry name" value="TRNA N6-ADENOSINE THREONYLCARBAMOYLTRANSFERASE, MITOCHONDRIAL"/>
    <property type="match status" value="1"/>
</dbReference>
<dbReference type="Pfam" id="PF00814">
    <property type="entry name" value="TsaD"/>
    <property type="match status" value="1"/>
</dbReference>
<dbReference type="PRINTS" id="PR00789">
    <property type="entry name" value="OSIALOPTASE"/>
</dbReference>
<dbReference type="SUPFAM" id="SSF53067">
    <property type="entry name" value="Actin-like ATPase domain"/>
    <property type="match status" value="2"/>
</dbReference>
<dbReference type="PROSITE" id="PS01016">
    <property type="entry name" value="GLYCOPROTEASE"/>
    <property type="match status" value="1"/>
</dbReference>
<evidence type="ECO:0000255" key="1">
    <source>
        <dbReference type="HAMAP-Rule" id="MF_01445"/>
    </source>
</evidence>